<dbReference type="EC" id="6.1.1.4" evidence="1"/>
<dbReference type="EMBL" id="CP000812">
    <property type="protein sequence ID" value="ABV34401.1"/>
    <property type="molecule type" value="Genomic_DNA"/>
</dbReference>
<dbReference type="RefSeq" id="WP_012003877.1">
    <property type="nucleotide sequence ID" value="NZ_BSDV01000001.1"/>
</dbReference>
<dbReference type="SMR" id="A8F8B7"/>
<dbReference type="STRING" id="416591.Tlet_1847"/>
<dbReference type="KEGG" id="tle:Tlet_1847"/>
<dbReference type="eggNOG" id="COG0495">
    <property type="taxonomic scope" value="Bacteria"/>
</dbReference>
<dbReference type="HOGENOM" id="CLU_004427_0_0_0"/>
<dbReference type="OrthoDB" id="9810365at2"/>
<dbReference type="Proteomes" id="UP000002016">
    <property type="component" value="Chromosome"/>
</dbReference>
<dbReference type="GO" id="GO:0005829">
    <property type="term" value="C:cytosol"/>
    <property type="evidence" value="ECO:0007669"/>
    <property type="project" value="TreeGrafter"/>
</dbReference>
<dbReference type="GO" id="GO:0002161">
    <property type="term" value="F:aminoacyl-tRNA deacylase activity"/>
    <property type="evidence" value="ECO:0007669"/>
    <property type="project" value="InterPro"/>
</dbReference>
<dbReference type="GO" id="GO:0005524">
    <property type="term" value="F:ATP binding"/>
    <property type="evidence" value="ECO:0007669"/>
    <property type="project" value="UniProtKB-UniRule"/>
</dbReference>
<dbReference type="GO" id="GO:0004823">
    <property type="term" value="F:leucine-tRNA ligase activity"/>
    <property type="evidence" value="ECO:0007669"/>
    <property type="project" value="UniProtKB-UniRule"/>
</dbReference>
<dbReference type="GO" id="GO:0006429">
    <property type="term" value="P:leucyl-tRNA aminoacylation"/>
    <property type="evidence" value="ECO:0007669"/>
    <property type="project" value="UniProtKB-UniRule"/>
</dbReference>
<dbReference type="CDD" id="cd07958">
    <property type="entry name" value="Anticodon_Ia_Leu_BEm"/>
    <property type="match status" value="1"/>
</dbReference>
<dbReference type="CDD" id="cd00812">
    <property type="entry name" value="LeuRS_core"/>
    <property type="match status" value="1"/>
</dbReference>
<dbReference type="FunFam" id="3.40.50.620:FF:000003">
    <property type="entry name" value="Leucine--tRNA ligase"/>
    <property type="match status" value="1"/>
</dbReference>
<dbReference type="FunFam" id="3.40.50.620:FF:000056">
    <property type="entry name" value="Leucine--tRNA ligase"/>
    <property type="match status" value="1"/>
</dbReference>
<dbReference type="FunFam" id="1.10.730.10:FF:000011">
    <property type="entry name" value="Leucine--tRNA ligase chloroplastic/mitochondrial"/>
    <property type="match status" value="1"/>
</dbReference>
<dbReference type="Gene3D" id="3.10.20.590">
    <property type="match status" value="1"/>
</dbReference>
<dbReference type="Gene3D" id="3.40.50.620">
    <property type="entry name" value="HUPs"/>
    <property type="match status" value="2"/>
</dbReference>
<dbReference type="Gene3D" id="1.10.730.10">
    <property type="entry name" value="Isoleucyl-tRNA Synthetase, Domain 1"/>
    <property type="match status" value="1"/>
</dbReference>
<dbReference type="HAMAP" id="MF_00049_B">
    <property type="entry name" value="Leu_tRNA_synth_B"/>
    <property type="match status" value="1"/>
</dbReference>
<dbReference type="InterPro" id="IPR001412">
    <property type="entry name" value="aa-tRNA-synth_I_CS"/>
</dbReference>
<dbReference type="InterPro" id="IPR002300">
    <property type="entry name" value="aa-tRNA-synth_Ia"/>
</dbReference>
<dbReference type="InterPro" id="IPR002302">
    <property type="entry name" value="Leu-tRNA-ligase"/>
</dbReference>
<dbReference type="InterPro" id="IPR025709">
    <property type="entry name" value="Leu_tRNA-synth_edit"/>
</dbReference>
<dbReference type="InterPro" id="IPR013155">
    <property type="entry name" value="M/V/L/I-tRNA-synth_anticd-bd"/>
</dbReference>
<dbReference type="InterPro" id="IPR015413">
    <property type="entry name" value="Methionyl/Leucyl_tRNA_Synth"/>
</dbReference>
<dbReference type="InterPro" id="IPR014729">
    <property type="entry name" value="Rossmann-like_a/b/a_fold"/>
</dbReference>
<dbReference type="InterPro" id="IPR009080">
    <property type="entry name" value="tRNAsynth_Ia_anticodon-bd"/>
</dbReference>
<dbReference type="InterPro" id="IPR009008">
    <property type="entry name" value="Val/Leu/Ile-tRNA-synth_edit"/>
</dbReference>
<dbReference type="NCBIfam" id="TIGR00396">
    <property type="entry name" value="leuS_bact"/>
    <property type="match status" value="1"/>
</dbReference>
<dbReference type="PANTHER" id="PTHR43740:SF2">
    <property type="entry name" value="LEUCINE--TRNA LIGASE, MITOCHONDRIAL"/>
    <property type="match status" value="1"/>
</dbReference>
<dbReference type="PANTHER" id="PTHR43740">
    <property type="entry name" value="LEUCYL-TRNA SYNTHETASE"/>
    <property type="match status" value="1"/>
</dbReference>
<dbReference type="Pfam" id="PF08264">
    <property type="entry name" value="Anticodon_1"/>
    <property type="match status" value="1"/>
</dbReference>
<dbReference type="Pfam" id="PF00133">
    <property type="entry name" value="tRNA-synt_1"/>
    <property type="match status" value="1"/>
</dbReference>
<dbReference type="Pfam" id="PF13603">
    <property type="entry name" value="tRNA-synt_1_2"/>
    <property type="match status" value="1"/>
</dbReference>
<dbReference type="Pfam" id="PF09334">
    <property type="entry name" value="tRNA-synt_1g"/>
    <property type="match status" value="1"/>
</dbReference>
<dbReference type="PRINTS" id="PR00985">
    <property type="entry name" value="TRNASYNTHLEU"/>
</dbReference>
<dbReference type="SUPFAM" id="SSF47323">
    <property type="entry name" value="Anticodon-binding domain of a subclass of class I aminoacyl-tRNA synthetases"/>
    <property type="match status" value="1"/>
</dbReference>
<dbReference type="SUPFAM" id="SSF52374">
    <property type="entry name" value="Nucleotidylyl transferase"/>
    <property type="match status" value="1"/>
</dbReference>
<dbReference type="SUPFAM" id="SSF50677">
    <property type="entry name" value="ValRS/IleRS/LeuRS editing domain"/>
    <property type="match status" value="1"/>
</dbReference>
<dbReference type="PROSITE" id="PS00178">
    <property type="entry name" value="AA_TRNA_LIGASE_I"/>
    <property type="match status" value="1"/>
</dbReference>
<keyword id="KW-0030">Aminoacyl-tRNA synthetase</keyword>
<keyword id="KW-0067">ATP-binding</keyword>
<keyword id="KW-0963">Cytoplasm</keyword>
<keyword id="KW-0436">Ligase</keyword>
<keyword id="KW-0547">Nucleotide-binding</keyword>
<keyword id="KW-0648">Protein biosynthesis</keyword>
<keyword id="KW-1185">Reference proteome</keyword>
<reference key="1">
    <citation type="submission" date="2007-08" db="EMBL/GenBank/DDBJ databases">
        <title>Complete sequence of Thermotoga lettingae TMO.</title>
        <authorList>
            <consortium name="US DOE Joint Genome Institute"/>
            <person name="Copeland A."/>
            <person name="Lucas S."/>
            <person name="Lapidus A."/>
            <person name="Barry K."/>
            <person name="Glavina del Rio T."/>
            <person name="Dalin E."/>
            <person name="Tice H."/>
            <person name="Pitluck S."/>
            <person name="Foster B."/>
            <person name="Bruce D."/>
            <person name="Schmutz J."/>
            <person name="Larimer F."/>
            <person name="Land M."/>
            <person name="Hauser L."/>
            <person name="Kyrpides N."/>
            <person name="Mikhailova N."/>
            <person name="Nelson K."/>
            <person name="Gogarten J.P."/>
            <person name="Noll K."/>
            <person name="Richardson P."/>
        </authorList>
    </citation>
    <scope>NUCLEOTIDE SEQUENCE [LARGE SCALE GENOMIC DNA]</scope>
    <source>
        <strain>ATCC BAA-301 / DSM 14385 / NBRC 107922 / TMO</strain>
    </source>
</reference>
<name>SYL_PSELT</name>
<gene>
    <name evidence="1" type="primary">leuS</name>
    <name type="ordered locus">Tlet_1847</name>
</gene>
<comment type="catalytic activity">
    <reaction evidence="1">
        <text>tRNA(Leu) + L-leucine + ATP = L-leucyl-tRNA(Leu) + AMP + diphosphate</text>
        <dbReference type="Rhea" id="RHEA:11688"/>
        <dbReference type="Rhea" id="RHEA-COMP:9613"/>
        <dbReference type="Rhea" id="RHEA-COMP:9622"/>
        <dbReference type="ChEBI" id="CHEBI:30616"/>
        <dbReference type="ChEBI" id="CHEBI:33019"/>
        <dbReference type="ChEBI" id="CHEBI:57427"/>
        <dbReference type="ChEBI" id="CHEBI:78442"/>
        <dbReference type="ChEBI" id="CHEBI:78494"/>
        <dbReference type="ChEBI" id="CHEBI:456215"/>
        <dbReference type="EC" id="6.1.1.4"/>
    </reaction>
</comment>
<comment type="subcellular location">
    <subcellularLocation>
        <location evidence="1">Cytoplasm</location>
    </subcellularLocation>
</comment>
<comment type="similarity">
    <text evidence="1">Belongs to the class-I aminoacyl-tRNA synthetase family.</text>
</comment>
<feature type="chain" id="PRO_1000071114" description="Leucine--tRNA ligase">
    <location>
        <begin position="1"/>
        <end position="815"/>
    </location>
</feature>
<feature type="short sequence motif" description="'HIGH' region">
    <location>
        <begin position="41"/>
        <end position="51"/>
    </location>
</feature>
<feature type="short sequence motif" description="'KMSKS' region">
    <location>
        <begin position="576"/>
        <end position="580"/>
    </location>
</feature>
<feature type="binding site" evidence="1">
    <location>
        <position position="579"/>
    </location>
    <ligand>
        <name>ATP</name>
        <dbReference type="ChEBI" id="CHEBI:30616"/>
    </ligand>
</feature>
<evidence type="ECO:0000255" key="1">
    <source>
        <dbReference type="HAMAP-Rule" id="MF_00049"/>
    </source>
</evidence>
<organism>
    <name type="scientific">Pseudothermotoga lettingae (strain ATCC BAA-301 / DSM 14385 / NBRC 107922 / TMO)</name>
    <name type="common">Thermotoga lettingae</name>
    <dbReference type="NCBI Taxonomy" id="416591"/>
    <lineage>
        <taxon>Bacteria</taxon>
        <taxon>Thermotogati</taxon>
        <taxon>Thermotogota</taxon>
        <taxon>Thermotogae</taxon>
        <taxon>Thermotogales</taxon>
        <taxon>Thermotogaceae</taxon>
        <taxon>Pseudothermotoga</taxon>
    </lineage>
</organism>
<sequence length="815" mass="94816">MPRYEPQEIESKWQKFWEKEGLFKTPQHSDLPKYYMLVMFPYPSGTLHVGHVKNYVIGDAVARYKRMRAYNVLHPFGYDAFGLPAENAAIERKIHPKDWTLNNINIIRRQIKKLGISYDWNREVITCLESYYKWTEWIFLKLYEAGLAYKKKAAVNWCPKCMTSLANEQVKDGRCERCDTPVTIKHLEQWFFKITDYAERLLKDLDKLTGWPEHVKTMQRNWIGESKGAKISFKVEESEMNIEVFTTRPDTLWGVTFMVLAPESDLVNHITLPELKGELEKFLNYVGQQDRHKRGSADVEKEGFFTGRYAINPVSGERIPIYVANYVLMEYGTGAVMGVPAHDQRDYEFAVKYNLPIKEVIKPSEDIPKNRAYDGPGIMVNSGPLNGTVVPEGIERVIQWLEERGIAKRSVQYKLRDWLISRQRYWGAPIPIVYCEKCGMVPVPEKSLPVQLPYDVEFLPTGQSPLMLNDEFRKTSCPKCGGPALRDADTMDTFVDSSWYFLRYVNPDRDDVPFVKEDVDHWLPVDQYVGGVEHAVLHLLYSRFITKVLYDLGYLSFDEPFENLFTQGMIYKDGAKMSKSKGNVVSPDEMIDRYGADTLRMYILFMGPPERDAEWNDAGIEGVYRFIRRAWSLMDQIISLPDNQNQVFAEEEKHLRRKLHISLRKVTQDMEGGFKFNTVVSSLMELVNDAYDYIDNLPQHRWNIKLLKELAKNFVLMISPFAPHFAEELWQRMGYSSSVMKEKWPEYDPDALVVEEVEIAIQVNGKLRDKVKIPVDATEDQIKEIALKSEKVRKYISDEPKKIIYVPKRLLNIIF</sequence>
<proteinExistence type="inferred from homology"/>
<accession>A8F8B7</accession>
<protein>
    <recommendedName>
        <fullName evidence="1">Leucine--tRNA ligase</fullName>
        <ecNumber evidence="1">6.1.1.4</ecNumber>
    </recommendedName>
    <alternativeName>
        <fullName evidence="1">Leucyl-tRNA synthetase</fullName>
        <shortName evidence="1">LeuRS</shortName>
    </alternativeName>
</protein>